<reference key="1">
    <citation type="journal article" date="2010" name="Mol. Phylogenet. Evol.">
        <title>Evolution of Conus peptide toxins: analysis of Conus californicus Reeve, 1844.</title>
        <authorList>
            <person name="Biggs J.S."/>
            <person name="Watkins M."/>
            <person name="Puillandre N."/>
            <person name="Ownby J.P."/>
            <person name="Lopez-Vera E."/>
            <person name="Christensen S."/>
            <person name="Moreno K.J."/>
            <person name="Bernaldez J."/>
            <person name="Licea-Navarro A."/>
            <person name="Corneli P.S."/>
            <person name="Olivera B.M."/>
        </authorList>
    </citation>
    <scope>NUCLEOTIDE SEQUENCE [GENOMIC DNA]</scope>
</reference>
<reference key="2">
    <citation type="journal article" date="2011" name="Toxicon">
        <title>Diversity of conotoxin types from Conus californicus reflects a diversity of prey types and a novel evolutionary history.</title>
        <authorList>
            <person name="Elliger C.A."/>
            <person name="Richmond T.A."/>
            <person name="Lebaric Z.N."/>
            <person name="Pierce N.T."/>
            <person name="Sweedler J.V."/>
            <person name="Gilly W.F."/>
        </authorList>
    </citation>
    <scope>NUCLEOTIDE SEQUENCE [MRNA]</scope>
    <source>
        <tissue>Venom duct</tissue>
    </source>
</reference>
<comment type="function">
    <text evidence="6">Probable neurotoxin with unknown target. Possibly targets ion channels.</text>
</comment>
<comment type="subcellular location">
    <subcellularLocation>
        <location evidence="7">Secreted</location>
    </subcellularLocation>
</comment>
<comment type="tissue specificity">
    <text evidence="7">Expressed by the venom duct.</text>
</comment>
<comment type="domain">
    <text evidence="1">The presence of a 'disulfide through disulfide knot' structurally defines this protein as a knottin.</text>
</comment>
<comment type="domain">
    <text>The cysteine framework is VI/VII (C-C-CC-C-C).</text>
</comment>
<comment type="similarity">
    <text evidence="6">Belongs to the conotoxin O1 superfamily.</text>
</comment>
<proteinExistence type="inferred from homology"/>
<keyword id="KW-0165">Cleavage on pair of basic residues</keyword>
<keyword id="KW-1015">Disulfide bond</keyword>
<keyword id="KW-0872">Ion channel impairing toxin</keyword>
<keyword id="KW-0960">Knottin</keyword>
<keyword id="KW-0528">Neurotoxin</keyword>
<keyword id="KW-0964">Secreted</keyword>
<keyword id="KW-0732">Signal</keyword>
<keyword id="KW-0800">Toxin</keyword>
<evidence type="ECO:0000250" key="1"/>
<evidence type="ECO:0000255" key="2"/>
<evidence type="ECO:0000256" key="3">
    <source>
        <dbReference type="SAM" id="MobiDB-lite"/>
    </source>
</evidence>
<evidence type="ECO:0000303" key="4">
    <source>
    </source>
</evidence>
<evidence type="ECO:0000303" key="5">
    <source>
    </source>
</evidence>
<evidence type="ECO:0000305" key="6"/>
<evidence type="ECO:0000305" key="7">
    <source>
    </source>
</evidence>
<feature type="signal peptide" evidence="2">
    <location>
        <begin position="1"/>
        <end position="22"/>
    </location>
</feature>
<feature type="propeptide" id="PRO_0000414967" evidence="7">
    <location>
        <begin position="23"/>
        <end position="68"/>
    </location>
</feature>
<feature type="peptide" id="PRO_0000414968" description="Conotoxin Cal6.1a" evidence="7">
    <location>
        <begin position="71"/>
        <end position="97"/>
    </location>
</feature>
<feature type="region of interest" description="Disordered" evidence="3">
    <location>
        <begin position="23"/>
        <end position="46"/>
    </location>
</feature>
<feature type="disulfide bond" evidence="1">
    <location>
        <begin position="71"/>
        <end position="87"/>
    </location>
</feature>
<feature type="disulfide bond" evidence="1">
    <location>
        <begin position="78"/>
        <end position="91"/>
    </location>
</feature>
<feature type="disulfide bond" evidence="1">
    <location>
        <begin position="86"/>
        <end position="96"/>
    </location>
</feature>
<feature type="sequence conflict" description="In Ref. 1; ADB93120." evidence="6" ref="1">
    <original>V</original>
    <variation>A</variation>
    <location>
        <position position="37"/>
    </location>
</feature>
<protein>
    <recommendedName>
        <fullName evidence="5">Conotoxin Cal6.1a</fullName>
    </recommendedName>
    <alternativeName>
        <fullName evidence="4">Conotoxin Cl6.1</fullName>
    </alternativeName>
</protein>
<sequence>MKLTTVLVVALLVLAACQFTVTDNSGDDPENPSLRSVGENQNPDSTKTITAWATRDMTNMRRGLNRPSKRCLAGSARCEFHKPSSCCSGHCIFWWCA</sequence>
<organism>
    <name type="scientific">Californiconus californicus</name>
    <name type="common">California cone</name>
    <name type="synonym">Conus californicus</name>
    <dbReference type="NCBI Taxonomy" id="1736779"/>
    <lineage>
        <taxon>Eukaryota</taxon>
        <taxon>Metazoa</taxon>
        <taxon>Spiralia</taxon>
        <taxon>Lophotrochozoa</taxon>
        <taxon>Mollusca</taxon>
        <taxon>Gastropoda</taxon>
        <taxon>Caenogastropoda</taxon>
        <taxon>Neogastropoda</taxon>
        <taxon>Conoidea</taxon>
        <taxon>Conidae</taxon>
        <taxon>Californiconus</taxon>
    </lineage>
</organism>
<dbReference type="EMBL" id="FJ959150">
    <property type="protein sequence ID" value="ADB93120.1"/>
    <property type="molecule type" value="Genomic_DNA"/>
</dbReference>
<dbReference type="EMBL" id="GU306159">
    <property type="protein sequence ID" value="ADB04238.1"/>
    <property type="molecule type" value="mRNA"/>
</dbReference>
<dbReference type="ConoServer" id="3969">
    <property type="toxin name" value="Cal6.1a precursor"/>
</dbReference>
<dbReference type="GO" id="GO:0005576">
    <property type="term" value="C:extracellular region"/>
    <property type="evidence" value="ECO:0007669"/>
    <property type="project" value="UniProtKB-SubCell"/>
</dbReference>
<dbReference type="GO" id="GO:0099106">
    <property type="term" value="F:ion channel regulator activity"/>
    <property type="evidence" value="ECO:0007669"/>
    <property type="project" value="UniProtKB-KW"/>
</dbReference>
<dbReference type="GO" id="GO:0090729">
    <property type="term" value="F:toxin activity"/>
    <property type="evidence" value="ECO:0007669"/>
    <property type="project" value="UniProtKB-KW"/>
</dbReference>
<name>O161A_CONCL</name>
<accession>D2Y495</accession>
<accession>D6C4K8</accession>